<organism>
    <name type="scientific">Dehalococcoides mccartyi (strain ATCC BAA-2100 / JCM 16839 / KCTC 5957 / BAV1)</name>
    <dbReference type="NCBI Taxonomy" id="216389"/>
    <lineage>
        <taxon>Bacteria</taxon>
        <taxon>Bacillati</taxon>
        <taxon>Chloroflexota</taxon>
        <taxon>Dehalococcoidia</taxon>
        <taxon>Dehalococcoidales</taxon>
        <taxon>Dehalococcoidaceae</taxon>
        <taxon>Dehalococcoides</taxon>
    </lineage>
</organism>
<accession>A5FRY5</accession>
<keyword id="KW-0687">Ribonucleoprotein</keyword>
<keyword id="KW-0689">Ribosomal protein</keyword>
<keyword id="KW-0694">RNA-binding</keyword>
<keyword id="KW-0699">rRNA-binding</keyword>
<comment type="function">
    <text evidence="1">Binds to 23S rRNA. Forms part of two intersubunit bridges in the 70S ribosome.</text>
</comment>
<comment type="subunit">
    <text evidence="1">Part of the 50S ribosomal subunit. Forms a cluster with proteins L3 and L19. In the 70S ribosome, L14 and L19 interact and together make contacts with the 16S rRNA in bridges B5 and B8.</text>
</comment>
<comment type="similarity">
    <text evidence="1">Belongs to the universal ribosomal protein uL14 family.</text>
</comment>
<protein>
    <recommendedName>
        <fullName evidence="1">Large ribosomal subunit protein uL14</fullName>
    </recommendedName>
    <alternativeName>
        <fullName evidence="2">50S ribosomal protein L14</fullName>
    </alternativeName>
</protein>
<dbReference type="EMBL" id="CP000688">
    <property type="protein sequence ID" value="ABQ17046.1"/>
    <property type="molecule type" value="Genomic_DNA"/>
</dbReference>
<dbReference type="SMR" id="A5FRY5"/>
<dbReference type="KEGG" id="deb:DehaBAV1_0461"/>
<dbReference type="PATRIC" id="fig|216389.18.peg.504"/>
<dbReference type="HOGENOM" id="CLU_095071_2_1_0"/>
<dbReference type="GO" id="GO:0022625">
    <property type="term" value="C:cytosolic large ribosomal subunit"/>
    <property type="evidence" value="ECO:0007669"/>
    <property type="project" value="TreeGrafter"/>
</dbReference>
<dbReference type="GO" id="GO:0070180">
    <property type="term" value="F:large ribosomal subunit rRNA binding"/>
    <property type="evidence" value="ECO:0007669"/>
    <property type="project" value="TreeGrafter"/>
</dbReference>
<dbReference type="GO" id="GO:0003735">
    <property type="term" value="F:structural constituent of ribosome"/>
    <property type="evidence" value="ECO:0007669"/>
    <property type="project" value="InterPro"/>
</dbReference>
<dbReference type="GO" id="GO:0006412">
    <property type="term" value="P:translation"/>
    <property type="evidence" value="ECO:0007669"/>
    <property type="project" value="UniProtKB-UniRule"/>
</dbReference>
<dbReference type="CDD" id="cd00337">
    <property type="entry name" value="Ribosomal_uL14"/>
    <property type="match status" value="1"/>
</dbReference>
<dbReference type="FunFam" id="2.40.150.20:FF:000001">
    <property type="entry name" value="50S ribosomal protein L14"/>
    <property type="match status" value="1"/>
</dbReference>
<dbReference type="Gene3D" id="2.40.150.20">
    <property type="entry name" value="Ribosomal protein L14"/>
    <property type="match status" value="1"/>
</dbReference>
<dbReference type="HAMAP" id="MF_01367">
    <property type="entry name" value="Ribosomal_uL14"/>
    <property type="match status" value="1"/>
</dbReference>
<dbReference type="InterPro" id="IPR000218">
    <property type="entry name" value="Ribosomal_uL14"/>
</dbReference>
<dbReference type="InterPro" id="IPR005745">
    <property type="entry name" value="Ribosomal_uL14_bac-type"/>
</dbReference>
<dbReference type="InterPro" id="IPR019972">
    <property type="entry name" value="Ribosomal_uL14_CS"/>
</dbReference>
<dbReference type="InterPro" id="IPR036853">
    <property type="entry name" value="Ribosomal_uL14_sf"/>
</dbReference>
<dbReference type="NCBIfam" id="TIGR01067">
    <property type="entry name" value="rplN_bact"/>
    <property type="match status" value="1"/>
</dbReference>
<dbReference type="PANTHER" id="PTHR11761">
    <property type="entry name" value="50S/60S RIBOSOMAL PROTEIN L14/L23"/>
    <property type="match status" value="1"/>
</dbReference>
<dbReference type="PANTHER" id="PTHR11761:SF3">
    <property type="entry name" value="LARGE RIBOSOMAL SUBUNIT PROTEIN UL14M"/>
    <property type="match status" value="1"/>
</dbReference>
<dbReference type="Pfam" id="PF00238">
    <property type="entry name" value="Ribosomal_L14"/>
    <property type="match status" value="1"/>
</dbReference>
<dbReference type="SMART" id="SM01374">
    <property type="entry name" value="Ribosomal_L14"/>
    <property type="match status" value="1"/>
</dbReference>
<dbReference type="SUPFAM" id="SSF50193">
    <property type="entry name" value="Ribosomal protein L14"/>
    <property type="match status" value="1"/>
</dbReference>
<dbReference type="PROSITE" id="PS00049">
    <property type="entry name" value="RIBOSOMAL_L14"/>
    <property type="match status" value="1"/>
</dbReference>
<name>RL14_DEHMB</name>
<feature type="chain" id="PRO_1000087125" description="Large ribosomal subunit protein uL14">
    <location>
        <begin position="1"/>
        <end position="122"/>
    </location>
</feature>
<proteinExistence type="inferred from homology"/>
<gene>
    <name evidence="1" type="primary">rplN</name>
    <name type="ordered locus">DehaBAV1_0461</name>
</gene>
<evidence type="ECO:0000255" key="1">
    <source>
        <dbReference type="HAMAP-Rule" id="MF_01367"/>
    </source>
</evidence>
<evidence type="ECO:0000305" key="2"/>
<reference key="1">
    <citation type="submission" date="2007-05" db="EMBL/GenBank/DDBJ databases">
        <title>Complete sequence of Dehalococcoides sp. BAV1.</title>
        <authorList>
            <consortium name="US DOE Joint Genome Institute"/>
            <person name="Copeland A."/>
            <person name="Lucas S."/>
            <person name="Lapidus A."/>
            <person name="Barry K."/>
            <person name="Detter J.C."/>
            <person name="Glavina del Rio T."/>
            <person name="Hammon N."/>
            <person name="Israni S."/>
            <person name="Pitluck S."/>
            <person name="Lowry S."/>
            <person name="Clum A."/>
            <person name="Schmutz J."/>
            <person name="Larimer F."/>
            <person name="Land M."/>
            <person name="Hauser L."/>
            <person name="Kyrpides N."/>
            <person name="Kim E."/>
            <person name="Ritalahti K.M."/>
            <person name="Loeffler F."/>
            <person name="Richardson P."/>
        </authorList>
    </citation>
    <scope>NUCLEOTIDE SEQUENCE [LARGE SCALE GENOMIC DNA]</scope>
    <source>
        <strain>ATCC BAA-2100 / JCM 16839 / KCTC 5957 / BAV1</strain>
    </source>
</reference>
<sequence>MVQQYTRLNVADNTGAKKIMCINVLGGSHKIQAKVGDVIVAAVKKSSPDAQAKSGTVVKAVVVRITKPYARPDGSYIKFDDNAAVILNDKMEPKGTRIFGPVARELRDKKFTKILSLAPEVL</sequence>